<accession>Q160X8</accession>
<name>RPOC_ROSDO</name>
<reference key="1">
    <citation type="journal article" date="2007" name="J. Bacteriol.">
        <title>The complete genome sequence of Roseobacter denitrificans reveals a mixotrophic rather than photosynthetic metabolism.</title>
        <authorList>
            <person name="Swingley W.D."/>
            <person name="Sadekar S."/>
            <person name="Mastrian S.D."/>
            <person name="Matthies H.J."/>
            <person name="Hao J."/>
            <person name="Ramos H."/>
            <person name="Acharya C.R."/>
            <person name="Conrad A.L."/>
            <person name="Taylor H.L."/>
            <person name="Dejesa L.C."/>
            <person name="Shah M.K."/>
            <person name="O'Huallachain M.E."/>
            <person name="Lince M.T."/>
            <person name="Blankenship R.E."/>
            <person name="Beatty J.T."/>
            <person name="Touchman J.W."/>
        </authorList>
    </citation>
    <scope>NUCLEOTIDE SEQUENCE [LARGE SCALE GENOMIC DNA]</scope>
    <source>
        <strain>ATCC 33942 / OCh 114</strain>
    </source>
</reference>
<evidence type="ECO:0000255" key="1">
    <source>
        <dbReference type="HAMAP-Rule" id="MF_01322"/>
    </source>
</evidence>
<feature type="chain" id="PRO_0000353425" description="DNA-directed RNA polymerase subunit beta'">
    <location>
        <begin position="1"/>
        <end position="1414"/>
    </location>
</feature>
<feature type="binding site" evidence="1">
    <location>
        <position position="72"/>
    </location>
    <ligand>
        <name>Zn(2+)</name>
        <dbReference type="ChEBI" id="CHEBI:29105"/>
        <label>1</label>
    </ligand>
</feature>
<feature type="binding site" evidence="1">
    <location>
        <position position="74"/>
    </location>
    <ligand>
        <name>Zn(2+)</name>
        <dbReference type="ChEBI" id="CHEBI:29105"/>
        <label>1</label>
    </ligand>
</feature>
<feature type="binding site" evidence="1">
    <location>
        <position position="87"/>
    </location>
    <ligand>
        <name>Zn(2+)</name>
        <dbReference type="ChEBI" id="CHEBI:29105"/>
        <label>1</label>
    </ligand>
</feature>
<feature type="binding site" evidence="1">
    <location>
        <position position="90"/>
    </location>
    <ligand>
        <name>Zn(2+)</name>
        <dbReference type="ChEBI" id="CHEBI:29105"/>
        <label>1</label>
    </ligand>
</feature>
<feature type="binding site" evidence="1">
    <location>
        <position position="463"/>
    </location>
    <ligand>
        <name>Mg(2+)</name>
        <dbReference type="ChEBI" id="CHEBI:18420"/>
    </ligand>
</feature>
<feature type="binding site" evidence="1">
    <location>
        <position position="465"/>
    </location>
    <ligand>
        <name>Mg(2+)</name>
        <dbReference type="ChEBI" id="CHEBI:18420"/>
    </ligand>
</feature>
<feature type="binding site" evidence="1">
    <location>
        <position position="467"/>
    </location>
    <ligand>
        <name>Mg(2+)</name>
        <dbReference type="ChEBI" id="CHEBI:18420"/>
    </ligand>
</feature>
<feature type="binding site" evidence="1">
    <location>
        <position position="811"/>
    </location>
    <ligand>
        <name>Zn(2+)</name>
        <dbReference type="ChEBI" id="CHEBI:29105"/>
        <label>2</label>
    </ligand>
</feature>
<feature type="binding site" evidence="1">
    <location>
        <position position="885"/>
    </location>
    <ligand>
        <name>Zn(2+)</name>
        <dbReference type="ChEBI" id="CHEBI:29105"/>
        <label>2</label>
    </ligand>
</feature>
<feature type="binding site" evidence="1">
    <location>
        <position position="892"/>
    </location>
    <ligand>
        <name>Zn(2+)</name>
        <dbReference type="ChEBI" id="CHEBI:29105"/>
        <label>2</label>
    </ligand>
</feature>
<feature type="binding site" evidence="1">
    <location>
        <position position="895"/>
    </location>
    <ligand>
        <name>Zn(2+)</name>
        <dbReference type="ChEBI" id="CHEBI:29105"/>
        <label>2</label>
    </ligand>
</feature>
<proteinExistence type="inferred from homology"/>
<comment type="function">
    <text evidence="1">DNA-dependent RNA polymerase catalyzes the transcription of DNA into RNA using the four ribonucleoside triphosphates as substrates.</text>
</comment>
<comment type="catalytic activity">
    <reaction evidence="1">
        <text>RNA(n) + a ribonucleoside 5'-triphosphate = RNA(n+1) + diphosphate</text>
        <dbReference type="Rhea" id="RHEA:21248"/>
        <dbReference type="Rhea" id="RHEA-COMP:14527"/>
        <dbReference type="Rhea" id="RHEA-COMP:17342"/>
        <dbReference type="ChEBI" id="CHEBI:33019"/>
        <dbReference type="ChEBI" id="CHEBI:61557"/>
        <dbReference type="ChEBI" id="CHEBI:140395"/>
        <dbReference type="EC" id="2.7.7.6"/>
    </reaction>
</comment>
<comment type="cofactor">
    <cofactor evidence="1">
        <name>Mg(2+)</name>
        <dbReference type="ChEBI" id="CHEBI:18420"/>
    </cofactor>
    <text evidence="1">Binds 1 Mg(2+) ion per subunit.</text>
</comment>
<comment type="cofactor">
    <cofactor evidence="1">
        <name>Zn(2+)</name>
        <dbReference type="ChEBI" id="CHEBI:29105"/>
    </cofactor>
    <text evidence="1">Binds 2 Zn(2+) ions per subunit.</text>
</comment>
<comment type="subunit">
    <text evidence="1">The RNAP catalytic core consists of 2 alpha, 1 beta, 1 beta' and 1 omega subunit. When a sigma factor is associated with the core the holoenzyme is formed, which can initiate transcription.</text>
</comment>
<comment type="similarity">
    <text evidence="1">Belongs to the RNA polymerase beta' chain family.</text>
</comment>
<organism>
    <name type="scientific">Roseobacter denitrificans (strain ATCC 33942 / OCh 114)</name>
    <name type="common">Erythrobacter sp. (strain OCh 114)</name>
    <name type="synonym">Roseobacter denitrificans</name>
    <dbReference type="NCBI Taxonomy" id="375451"/>
    <lineage>
        <taxon>Bacteria</taxon>
        <taxon>Pseudomonadati</taxon>
        <taxon>Pseudomonadota</taxon>
        <taxon>Alphaproteobacteria</taxon>
        <taxon>Rhodobacterales</taxon>
        <taxon>Roseobacteraceae</taxon>
        <taxon>Roseobacter</taxon>
    </lineage>
</organism>
<sequence length="1414" mass="156725">MNQELTNNPFNPVAPLKTFDEIKVSLASPERILSWSFGEIKKPETINYRTFKPERDGLFCARIFGPIKDYECLCGKYKRMKYRGVVCEKCGVEVTLQKVRRERMGHIELASPVAHIWFLKSLPSRIGLMLDMTLRDLERVLYFENYVVIEPGLTELTYGQMMTEEEYMDAQDIYGMDAFTANIGAEAIREMLAAIDLEAEADQLRADLKEATGELKPKKIIKRLKVVESFLESGNRPEWMVLTVIPVIPPELRPLVPLDGGRFATSDLNDLYRRVINRNNRLKRLIELRAPDIIVRNEKRMLQESVDALFDNGRRGRVITGANKRPLKSLSDMLKGKQGRFRQNLLGKRVDFSGRSVIVTGPELKLHQCGLPKKMALELFKPFIYSRLEAKGLSSTVKQAKKLVEKERPEVWDILDEVIREHPVMLNRAPTLHRLGIQAFEPVLIEGKAIQLHPLVCSAFNADFDGDQMAVHVPLSLEAQLEARVLMMSTNNVLSPANGAPIIVPSQDMILGLYYTTLEREGMKGEGMVFGSVEEVQHALDAGMVHLHSKITARITQIDENGLEVMKRFDTTPGRIRLGALLPLNAKAPFDLVNRLLRKKEVQQIIDTVYRYCGQKESVIFCDQIMTMGFREAFKAGISFGKDDMLIPDTKWPIVGETRELVKDFEQQYMDGLITQGEKYNKVVDAWSKCNDKVTDAMMGSISASRKDADGSEMEPNSVYMMAHSGARGSVTQMKQLGGMRGLMAKPNGDIIETPIISNFKEGLTVLEYFNSTHGARKGLSDTALKTANSGYLTRRLVDVAQDCIVRMRDCGTESSITAVAAVNDGEVVSSLSERILGRVLAEDVVRPGTDEVLAAAGTLIDERMSDTIEEAGVASARIRSPLTCEAEEGVCAMCYGRDLARGTMVNTGEAVGIIAAQSIGEPGTQLTMRTFHIGGVAQGGQQSFLEASHSGKVVFDNAQTLENDAGEIMVMGRNMKLIIQDDNGEERASHKVGYGTKLFVTEGQKVARGDKLFEWDPYTLPIIAEKSGTAKFVDLVSGIAIKDETDDATGMTQKIVIDWRSATKGNELKPEIILVDADGEPVRNDAGNPVTYPMSVDAVLSIEDQAEVKAGDVVARIPREGAKTKDITGGLPRVAELFEARRPKDHAIIAEIDGYVRYGKDYKNKRRIAIESSEDPDHKVEYMVPKGKHIPVAEGDFVQKGDYIMDGNPAPHDILAIMGVEALADYMIDEVQDVYRLQGVKINDKHIEVIVRQMLQKWEIQESGDTTLLKGEHVDKQEFDQANAKALSKNGRPAKGEPILLGITKASLQTRSFISAASFQETTRVLTEASVQGKKDKLVGLKENVIVGRLIPAGTGGATMKVRRVAQDRDNVVIEARREEAEAAAALAAPVADDMVGGDVFDQPVHHEEESRD</sequence>
<dbReference type="EC" id="2.7.7.6" evidence="1"/>
<dbReference type="EMBL" id="CP000362">
    <property type="protein sequence ID" value="ABG33465.1"/>
    <property type="molecule type" value="Genomic_DNA"/>
</dbReference>
<dbReference type="RefSeq" id="WP_011570075.1">
    <property type="nucleotide sequence ID" value="NC_008209.1"/>
</dbReference>
<dbReference type="SMR" id="Q160X8"/>
<dbReference type="STRING" id="375451.RD1_4018"/>
<dbReference type="KEGG" id="rde:RD1_4018"/>
<dbReference type="eggNOG" id="COG0086">
    <property type="taxonomic scope" value="Bacteria"/>
</dbReference>
<dbReference type="HOGENOM" id="CLU_000524_3_1_5"/>
<dbReference type="OrthoDB" id="9815296at2"/>
<dbReference type="Proteomes" id="UP000007029">
    <property type="component" value="Chromosome"/>
</dbReference>
<dbReference type="GO" id="GO:0000428">
    <property type="term" value="C:DNA-directed RNA polymerase complex"/>
    <property type="evidence" value="ECO:0007669"/>
    <property type="project" value="UniProtKB-KW"/>
</dbReference>
<dbReference type="GO" id="GO:0003677">
    <property type="term" value="F:DNA binding"/>
    <property type="evidence" value="ECO:0007669"/>
    <property type="project" value="UniProtKB-UniRule"/>
</dbReference>
<dbReference type="GO" id="GO:0003899">
    <property type="term" value="F:DNA-directed RNA polymerase activity"/>
    <property type="evidence" value="ECO:0007669"/>
    <property type="project" value="UniProtKB-UniRule"/>
</dbReference>
<dbReference type="GO" id="GO:0000287">
    <property type="term" value="F:magnesium ion binding"/>
    <property type="evidence" value="ECO:0007669"/>
    <property type="project" value="UniProtKB-UniRule"/>
</dbReference>
<dbReference type="GO" id="GO:0008270">
    <property type="term" value="F:zinc ion binding"/>
    <property type="evidence" value="ECO:0007669"/>
    <property type="project" value="UniProtKB-UniRule"/>
</dbReference>
<dbReference type="GO" id="GO:0006351">
    <property type="term" value="P:DNA-templated transcription"/>
    <property type="evidence" value="ECO:0007669"/>
    <property type="project" value="UniProtKB-UniRule"/>
</dbReference>
<dbReference type="CDD" id="cd02655">
    <property type="entry name" value="RNAP_beta'_C"/>
    <property type="match status" value="1"/>
</dbReference>
<dbReference type="CDD" id="cd01609">
    <property type="entry name" value="RNAP_beta'_N"/>
    <property type="match status" value="1"/>
</dbReference>
<dbReference type="Gene3D" id="1.10.132.30">
    <property type="match status" value="1"/>
</dbReference>
<dbReference type="Gene3D" id="1.10.150.390">
    <property type="match status" value="1"/>
</dbReference>
<dbReference type="Gene3D" id="1.10.1790.20">
    <property type="match status" value="1"/>
</dbReference>
<dbReference type="Gene3D" id="1.10.40.90">
    <property type="match status" value="1"/>
</dbReference>
<dbReference type="Gene3D" id="2.40.40.20">
    <property type="match status" value="1"/>
</dbReference>
<dbReference type="Gene3D" id="2.40.50.100">
    <property type="match status" value="3"/>
</dbReference>
<dbReference type="Gene3D" id="4.10.860.120">
    <property type="entry name" value="RNA polymerase II, clamp domain"/>
    <property type="match status" value="1"/>
</dbReference>
<dbReference type="Gene3D" id="1.10.274.100">
    <property type="entry name" value="RNA polymerase Rpb1, domain 3"/>
    <property type="match status" value="2"/>
</dbReference>
<dbReference type="HAMAP" id="MF_01322">
    <property type="entry name" value="RNApol_bact_RpoC"/>
    <property type="match status" value="1"/>
</dbReference>
<dbReference type="InterPro" id="IPR045867">
    <property type="entry name" value="DNA-dir_RpoC_beta_prime"/>
</dbReference>
<dbReference type="InterPro" id="IPR012754">
    <property type="entry name" value="DNA-dir_RpoC_beta_prime_bact"/>
</dbReference>
<dbReference type="InterPro" id="IPR000722">
    <property type="entry name" value="RNA_pol_asu"/>
</dbReference>
<dbReference type="InterPro" id="IPR006592">
    <property type="entry name" value="RNA_pol_N"/>
</dbReference>
<dbReference type="InterPro" id="IPR007080">
    <property type="entry name" value="RNA_pol_Rpb1_1"/>
</dbReference>
<dbReference type="InterPro" id="IPR007066">
    <property type="entry name" value="RNA_pol_Rpb1_3"/>
</dbReference>
<dbReference type="InterPro" id="IPR042102">
    <property type="entry name" value="RNA_pol_Rpb1_3_sf"/>
</dbReference>
<dbReference type="InterPro" id="IPR007083">
    <property type="entry name" value="RNA_pol_Rpb1_4"/>
</dbReference>
<dbReference type="InterPro" id="IPR007081">
    <property type="entry name" value="RNA_pol_Rpb1_5"/>
</dbReference>
<dbReference type="InterPro" id="IPR044893">
    <property type="entry name" value="RNA_pol_Rpb1_clamp_domain"/>
</dbReference>
<dbReference type="InterPro" id="IPR038120">
    <property type="entry name" value="Rpb1_funnel_sf"/>
</dbReference>
<dbReference type="NCBIfam" id="TIGR02386">
    <property type="entry name" value="rpoC_TIGR"/>
    <property type="match status" value="1"/>
</dbReference>
<dbReference type="PANTHER" id="PTHR19376">
    <property type="entry name" value="DNA-DIRECTED RNA POLYMERASE"/>
    <property type="match status" value="1"/>
</dbReference>
<dbReference type="PANTHER" id="PTHR19376:SF54">
    <property type="entry name" value="DNA-DIRECTED RNA POLYMERASE SUBUNIT BETA"/>
    <property type="match status" value="1"/>
</dbReference>
<dbReference type="Pfam" id="PF04997">
    <property type="entry name" value="RNA_pol_Rpb1_1"/>
    <property type="match status" value="1"/>
</dbReference>
<dbReference type="Pfam" id="PF00623">
    <property type="entry name" value="RNA_pol_Rpb1_2"/>
    <property type="match status" value="2"/>
</dbReference>
<dbReference type="Pfam" id="PF04983">
    <property type="entry name" value="RNA_pol_Rpb1_3"/>
    <property type="match status" value="1"/>
</dbReference>
<dbReference type="Pfam" id="PF05000">
    <property type="entry name" value="RNA_pol_Rpb1_4"/>
    <property type="match status" value="1"/>
</dbReference>
<dbReference type="Pfam" id="PF04998">
    <property type="entry name" value="RNA_pol_Rpb1_5"/>
    <property type="match status" value="1"/>
</dbReference>
<dbReference type="SMART" id="SM00663">
    <property type="entry name" value="RPOLA_N"/>
    <property type="match status" value="1"/>
</dbReference>
<dbReference type="SUPFAM" id="SSF64484">
    <property type="entry name" value="beta and beta-prime subunits of DNA dependent RNA-polymerase"/>
    <property type="match status" value="1"/>
</dbReference>
<protein>
    <recommendedName>
        <fullName evidence="1">DNA-directed RNA polymerase subunit beta'</fullName>
        <shortName evidence="1">RNAP subunit beta'</shortName>
        <ecNumber evidence="1">2.7.7.6</ecNumber>
    </recommendedName>
    <alternativeName>
        <fullName evidence="1">RNA polymerase subunit beta'</fullName>
    </alternativeName>
    <alternativeName>
        <fullName evidence="1">Transcriptase subunit beta'</fullName>
    </alternativeName>
</protein>
<gene>
    <name evidence="1" type="primary">rpoC</name>
    <name type="ordered locus">RD1_4018</name>
</gene>
<keyword id="KW-0240">DNA-directed RNA polymerase</keyword>
<keyword id="KW-0460">Magnesium</keyword>
<keyword id="KW-0479">Metal-binding</keyword>
<keyword id="KW-0548">Nucleotidyltransferase</keyword>
<keyword id="KW-1185">Reference proteome</keyword>
<keyword id="KW-0804">Transcription</keyword>
<keyword id="KW-0808">Transferase</keyword>
<keyword id="KW-0862">Zinc</keyword>